<reference key="1">
    <citation type="journal article" date="2005" name="Nature">
        <title>Genome sequencing and analysis of Aspergillus oryzae.</title>
        <authorList>
            <person name="Machida M."/>
            <person name="Asai K."/>
            <person name="Sano M."/>
            <person name="Tanaka T."/>
            <person name="Kumagai T."/>
            <person name="Terai G."/>
            <person name="Kusumoto K."/>
            <person name="Arima T."/>
            <person name="Akita O."/>
            <person name="Kashiwagi Y."/>
            <person name="Abe K."/>
            <person name="Gomi K."/>
            <person name="Horiuchi H."/>
            <person name="Kitamoto K."/>
            <person name="Kobayashi T."/>
            <person name="Takeuchi M."/>
            <person name="Denning D.W."/>
            <person name="Galagan J.E."/>
            <person name="Nierman W.C."/>
            <person name="Yu J."/>
            <person name="Archer D.B."/>
            <person name="Bennett J.W."/>
            <person name="Bhatnagar D."/>
            <person name="Cleveland T.E."/>
            <person name="Fedorova N.D."/>
            <person name="Gotoh O."/>
            <person name="Horikawa H."/>
            <person name="Hosoyama A."/>
            <person name="Ichinomiya M."/>
            <person name="Igarashi R."/>
            <person name="Iwashita K."/>
            <person name="Juvvadi P.R."/>
            <person name="Kato M."/>
            <person name="Kato Y."/>
            <person name="Kin T."/>
            <person name="Kokubun A."/>
            <person name="Maeda H."/>
            <person name="Maeyama N."/>
            <person name="Maruyama J."/>
            <person name="Nagasaki H."/>
            <person name="Nakajima T."/>
            <person name="Oda K."/>
            <person name="Okada K."/>
            <person name="Paulsen I."/>
            <person name="Sakamoto K."/>
            <person name="Sawano T."/>
            <person name="Takahashi M."/>
            <person name="Takase K."/>
            <person name="Terabayashi Y."/>
            <person name="Wortman J.R."/>
            <person name="Yamada O."/>
            <person name="Yamagata Y."/>
            <person name="Anazawa H."/>
            <person name="Hata Y."/>
            <person name="Koide Y."/>
            <person name="Komori T."/>
            <person name="Koyama Y."/>
            <person name="Minetoki T."/>
            <person name="Suharnan S."/>
            <person name="Tanaka A."/>
            <person name="Isono K."/>
            <person name="Kuhara S."/>
            <person name="Ogasawara N."/>
            <person name="Kikuchi H."/>
        </authorList>
    </citation>
    <scope>NUCLEOTIDE SEQUENCE [LARGE SCALE GENOMIC DNA]</scope>
    <source>
        <strain>ATCC 42149 / RIB 40</strain>
    </source>
</reference>
<evidence type="ECO:0000250" key="1"/>
<evidence type="ECO:0000255" key="2"/>
<evidence type="ECO:0000305" key="3"/>
<feature type="signal peptide" evidence="2">
    <location>
        <begin position="1"/>
        <end position="17"/>
    </location>
</feature>
<feature type="chain" id="PRO_0000429638" description="Endo-chitosanase B">
    <location>
        <begin position="18"/>
        <end position="241"/>
    </location>
</feature>
<feature type="glycosylation site" description="N-linked (GlcNAc...) asparagine" evidence="2">
    <location>
        <position position="86"/>
    </location>
</feature>
<name>CSNB_ASPOR</name>
<proteinExistence type="inferred from homology"/>
<organism>
    <name type="scientific">Aspergillus oryzae (strain ATCC 42149 / RIB 40)</name>
    <name type="common">Yellow koji mold</name>
    <dbReference type="NCBI Taxonomy" id="510516"/>
    <lineage>
        <taxon>Eukaryota</taxon>
        <taxon>Fungi</taxon>
        <taxon>Dikarya</taxon>
        <taxon>Ascomycota</taxon>
        <taxon>Pezizomycotina</taxon>
        <taxon>Eurotiomycetes</taxon>
        <taxon>Eurotiomycetidae</taxon>
        <taxon>Eurotiales</taxon>
        <taxon>Aspergillaceae</taxon>
        <taxon>Aspergillus</taxon>
        <taxon>Aspergillus subgen. Circumdati</taxon>
    </lineage>
</organism>
<protein>
    <recommendedName>
        <fullName>Endo-chitosanase B</fullName>
        <ecNumber>3.2.1.132</ecNumber>
    </recommendedName>
</protein>
<comment type="function">
    <text evidence="1">Chitosanase catalyzing the endo-type cleavage of chitosan, the deacylated form of chitin. Chitosanase may be crucial in the degradation of the deacetylated portion of chitin in the fungal cell wall. Chitoolisaccharides produced by the hydrolysis of partially N-acetylated chitosan are known to have many biological activities, including antibacterial activity, immune-enhancing effects, and elicitor activity (By similarity).</text>
</comment>
<comment type="catalytic activity">
    <reaction>
        <text>Endohydrolysis of beta-(1-&gt;4)-linkages between D-glucosamine residues in a partly acetylated chitosan.</text>
        <dbReference type="EC" id="3.2.1.132"/>
    </reaction>
</comment>
<comment type="subcellular location">
    <subcellularLocation>
        <location evidence="1">Secreted</location>
    </subcellularLocation>
</comment>
<comment type="similarity">
    <text evidence="3">Belongs to the glycosyl hydrolase 75 family.</text>
</comment>
<accession>Q2U1H5</accession>
<gene>
    <name type="primary">csnB</name>
    <name type="ORF">AO090011000027</name>
</gene>
<dbReference type="EC" id="3.2.1.132"/>
<dbReference type="EMBL" id="BA000055">
    <property type="protein sequence ID" value="BAE64590.1"/>
    <property type="molecule type" value="Genomic_DNA"/>
</dbReference>
<dbReference type="RefSeq" id="XP_001825723.1">
    <property type="nucleotide sequence ID" value="XM_001825671.1"/>
</dbReference>
<dbReference type="STRING" id="510516.Q2U1H5"/>
<dbReference type="CAZy" id="GH75">
    <property type="family name" value="Glycoside Hydrolase Family 75"/>
</dbReference>
<dbReference type="GlyCosmos" id="Q2U1H5">
    <property type="glycosylation" value="1 site, No reported glycans"/>
</dbReference>
<dbReference type="EnsemblFungi" id="BAE64590">
    <property type="protein sequence ID" value="BAE64590"/>
    <property type="gene ID" value="AO090011000027"/>
</dbReference>
<dbReference type="GeneID" id="5997826"/>
<dbReference type="KEGG" id="aor:AO090011000027"/>
<dbReference type="VEuPathDB" id="FungiDB:AO090011000027"/>
<dbReference type="HOGENOM" id="CLU_046555_0_0_1"/>
<dbReference type="OMA" id="GATAKWK"/>
<dbReference type="OrthoDB" id="117434at5052"/>
<dbReference type="Proteomes" id="UP000006564">
    <property type="component" value="Chromosome 7"/>
</dbReference>
<dbReference type="GO" id="GO:0005576">
    <property type="term" value="C:extracellular region"/>
    <property type="evidence" value="ECO:0007669"/>
    <property type="project" value="UniProtKB-SubCell"/>
</dbReference>
<dbReference type="GO" id="GO:0016977">
    <property type="term" value="F:chitosanase activity"/>
    <property type="evidence" value="ECO:0007669"/>
    <property type="project" value="UniProtKB-EC"/>
</dbReference>
<dbReference type="GO" id="GO:0000272">
    <property type="term" value="P:polysaccharide catabolic process"/>
    <property type="evidence" value="ECO:0007669"/>
    <property type="project" value="UniProtKB-KW"/>
</dbReference>
<dbReference type="InterPro" id="IPR009939">
    <property type="entry name" value="Chitosanase_fungal"/>
</dbReference>
<dbReference type="PANTHER" id="PTHR42061">
    <property type="entry name" value="ENDO-CHITOSANASE"/>
    <property type="match status" value="1"/>
</dbReference>
<dbReference type="PANTHER" id="PTHR42061:SF9">
    <property type="entry name" value="ENDO-CHITOSANASE"/>
    <property type="match status" value="1"/>
</dbReference>
<dbReference type="Pfam" id="PF07335">
    <property type="entry name" value="Glyco_hydro_75"/>
    <property type="match status" value="1"/>
</dbReference>
<sequence length="241" mass="25887">MRLSEILAVALVTGATAYDLPDNLKQIYEKHKGKCSKVYQKGFTNGGHSDGKSFEYCGDIEGAIFMHSSAKGGQYTNMDVDCDGANNSAGKCSNDPSGQGVTAFKDEVKKFGIPDLDANLHPYIVFGNEEHSPQFKPQKYGMEPLSVMAVVCNGKLHYGIWGDTNGGTSTGEASLSMAELCFPEEKPDGDHGHDDNDVLYIGFTGKDAVPGKSANWKAKKTEDFEDSIKSIGDKLVAGLKA</sequence>
<keyword id="KW-0119">Carbohydrate metabolism</keyword>
<keyword id="KW-0325">Glycoprotein</keyword>
<keyword id="KW-0326">Glycosidase</keyword>
<keyword id="KW-0378">Hydrolase</keyword>
<keyword id="KW-0624">Polysaccharide degradation</keyword>
<keyword id="KW-1185">Reference proteome</keyword>
<keyword id="KW-0964">Secreted</keyword>
<keyword id="KW-0732">Signal</keyword>